<evidence type="ECO:0000255" key="1">
    <source>
        <dbReference type="HAMAP-Rule" id="MF_00168"/>
    </source>
</evidence>
<protein>
    <recommendedName>
        <fullName evidence="1">Queuine tRNA-ribosyltransferase</fullName>
        <ecNumber evidence="1">2.4.2.29</ecNumber>
    </recommendedName>
    <alternativeName>
        <fullName evidence="1">Guanine insertion enzyme</fullName>
    </alternativeName>
    <alternativeName>
        <fullName evidence="1">tRNA-guanine transglycosylase</fullName>
    </alternativeName>
</protein>
<gene>
    <name evidence="1" type="primary">tgt</name>
    <name type="ordered locus">SZO_01620</name>
</gene>
<dbReference type="EC" id="2.4.2.29" evidence="1"/>
<dbReference type="EMBL" id="FM204884">
    <property type="protein sequence ID" value="CAW97850.1"/>
    <property type="molecule type" value="Genomic_DNA"/>
</dbReference>
<dbReference type="SMR" id="C0MEV8"/>
<dbReference type="KEGG" id="seq:SZO_01620"/>
<dbReference type="eggNOG" id="COG0343">
    <property type="taxonomic scope" value="Bacteria"/>
</dbReference>
<dbReference type="HOGENOM" id="CLU_022060_0_1_9"/>
<dbReference type="UniPathway" id="UPA00392"/>
<dbReference type="Proteomes" id="UP000001368">
    <property type="component" value="Chromosome"/>
</dbReference>
<dbReference type="GO" id="GO:0005829">
    <property type="term" value="C:cytosol"/>
    <property type="evidence" value="ECO:0007669"/>
    <property type="project" value="TreeGrafter"/>
</dbReference>
<dbReference type="GO" id="GO:0046872">
    <property type="term" value="F:metal ion binding"/>
    <property type="evidence" value="ECO:0007669"/>
    <property type="project" value="UniProtKB-KW"/>
</dbReference>
<dbReference type="GO" id="GO:0008479">
    <property type="term" value="F:tRNA-guanosine(34) queuine transglycosylase activity"/>
    <property type="evidence" value="ECO:0007669"/>
    <property type="project" value="UniProtKB-UniRule"/>
</dbReference>
<dbReference type="GO" id="GO:0008616">
    <property type="term" value="P:queuosine biosynthetic process"/>
    <property type="evidence" value="ECO:0007669"/>
    <property type="project" value="UniProtKB-UniRule"/>
</dbReference>
<dbReference type="GO" id="GO:0002099">
    <property type="term" value="P:tRNA wobble guanine modification"/>
    <property type="evidence" value="ECO:0007669"/>
    <property type="project" value="TreeGrafter"/>
</dbReference>
<dbReference type="GO" id="GO:0101030">
    <property type="term" value="P:tRNA-guanine transglycosylation"/>
    <property type="evidence" value="ECO:0007669"/>
    <property type="project" value="InterPro"/>
</dbReference>
<dbReference type="FunFam" id="3.20.20.105:FF:000001">
    <property type="entry name" value="Queuine tRNA-ribosyltransferase"/>
    <property type="match status" value="1"/>
</dbReference>
<dbReference type="Gene3D" id="3.20.20.105">
    <property type="entry name" value="Queuine tRNA-ribosyltransferase-like"/>
    <property type="match status" value="1"/>
</dbReference>
<dbReference type="HAMAP" id="MF_00168">
    <property type="entry name" value="Q_tRNA_Tgt"/>
    <property type="match status" value="1"/>
</dbReference>
<dbReference type="InterPro" id="IPR050076">
    <property type="entry name" value="ArchSynthase1/Queuine_TRR"/>
</dbReference>
<dbReference type="InterPro" id="IPR004803">
    <property type="entry name" value="TGT"/>
</dbReference>
<dbReference type="InterPro" id="IPR036511">
    <property type="entry name" value="TGT-like_sf"/>
</dbReference>
<dbReference type="InterPro" id="IPR002616">
    <property type="entry name" value="tRNA_ribo_trans-like"/>
</dbReference>
<dbReference type="NCBIfam" id="TIGR00430">
    <property type="entry name" value="Q_tRNA_tgt"/>
    <property type="match status" value="1"/>
</dbReference>
<dbReference type="NCBIfam" id="TIGR00449">
    <property type="entry name" value="tgt_general"/>
    <property type="match status" value="1"/>
</dbReference>
<dbReference type="PANTHER" id="PTHR46499">
    <property type="entry name" value="QUEUINE TRNA-RIBOSYLTRANSFERASE"/>
    <property type="match status" value="1"/>
</dbReference>
<dbReference type="PANTHER" id="PTHR46499:SF1">
    <property type="entry name" value="QUEUINE TRNA-RIBOSYLTRANSFERASE"/>
    <property type="match status" value="1"/>
</dbReference>
<dbReference type="Pfam" id="PF01702">
    <property type="entry name" value="TGT"/>
    <property type="match status" value="1"/>
</dbReference>
<dbReference type="SUPFAM" id="SSF51713">
    <property type="entry name" value="tRNA-guanine transglycosylase"/>
    <property type="match status" value="1"/>
</dbReference>
<proteinExistence type="inferred from homology"/>
<sequence>MTNYPITYRLIKKEKHTGARLGEIITPHGTFPTPMFMPVGTQATVKTQSPEELKEIGSGIILSNTYHLWLRPGDELIARAGGLHKFMNWDQAILTDSGGFQVYSLADSRNITEEGVTFKNHLNGSKMFLSPEKAISIQNNLGSDIMMSFDECPQFYQPYDYVKKSIERTSRWAERGLKAHRRPHDQGLFGIVQGAGFEDLRRQSAADLVGMDFPGYSIGGLAVGESHAEMNAVLDFTTPLLPENKPRYLMGVGAPDSLIDGVIRGVDMFDCVLPTRIARNGTCMTSEGRLVVKNAKFAEDFTPLDHNCDCYTCQHYTRAYLRHLLKADETFGMRLTSYHNLYFLVNLMKQVRQAIMDDNLLEFRQDFLERYGYNSSSRNF</sequence>
<comment type="function">
    <text evidence="1">Catalyzes the base-exchange of a guanine (G) residue with the queuine precursor 7-aminomethyl-7-deazaguanine (PreQ1) at position 34 (anticodon wobble position) in tRNAs with GU(N) anticodons (tRNA-Asp, -Asn, -His and -Tyr). Catalysis occurs through a double-displacement mechanism. The nucleophile active site attacks the C1' of nucleotide 34 to detach the guanine base from the RNA, forming a covalent enzyme-RNA intermediate. The proton acceptor active site deprotonates the incoming PreQ1, allowing a nucleophilic attack on the C1' of the ribose to form the product. After dissociation, two additional enzymatic reactions on the tRNA convert PreQ1 to queuine (Q), resulting in the hypermodified nucleoside queuosine (7-(((4,5-cis-dihydroxy-2-cyclopenten-1-yl)amino)methyl)-7-deazaguanosine).</text>
</comment>
<comment type="catalytic activity">
    <reaction evidence="1">
        <text>7-aminomethyl-7-carbaguanine + guanosine(34) in tRNA = 7-aminomethyl-7-carbaguanosine(34) in tRNA + guanine</text>
        <dbReference type="Rhea" id="RHEA:24104"/>
        <dbReference type="Rhea" id="RHEA-COMP:10341"/>
        <dbReference type="Rhea" id="RHEA-COMP:10342"/>
        <dbReference type="ChEBI" id="CHEBI:16235"/>
        <dbReference type="ChEBI" id="CHEBI:58703"/>
        <dbReference type="ChEBI" id="CHEBI:74269"/>
        <dbReference type="ChEBI" id="CHEBI:82833"/>
        <dbReference type="EC" id="2.4.2.29"/>
    </reaction>
</comment>
<comment type="cofactor">
    <cofactor evidence="1">
        <name>Zn(2+)</name>
        <dbReference type="ChEBI" id="CHEBI:29105"/>
    </cofactor>
    <text evidence="1">Binds 1 zinc ion per subunit.</text>
</comment>
<comment type="pathway">
    <text evidence="1">tRNA modification; tRNA-queuosine biosynthesis.</text>
</comment>
<comment type="subunit">
    <text evidence="1">Homodimer. Within each dimer, one monomer is responsible for RNA recognition and catalysis, while the other monomer binds to the replacement base PreQ1.</text>
</comment>
<comment type="similarity">
    <text evidence="1">Belongs to the queuine tRNA-ribosyltransferase family.</text>
</comment>
<organism>
    <name type="scientific">Streptococcus equi subsp. zooepidemicus (strain H70)</name>
    <dbReference type="NCBI Taxonomy" id="553483"/>
    <lineage>
        <taxon>Bacteria</taxon>
        <taxon>Bacillati</taxon>
        <taxon>Bacillota</taxon>
        <taxon>Bacilli</taxon>
        <taxon>Lactobacillales</taxon>
        <taxon>Streptococcaceae</taxon>
        <taxon>Streptococcus</taxon>
    </lineage>
</organism>
<feature type="chain" id="PRO_1000203664" description="Queuine tRNA-ribosyltransferase">
    <location>
        <begin position="1"/>
        <end position="380"/>
    </location>
</feature>
<feature type="region of interest" description="RNA binding" evidence="1">
    <location>
        <begin position="251"/>
        <end position="257"/>
    </location>
</feature>
<feature type="region of interest" description="RNA binding; important for wobble base 34 recognition" evidence="1">
    <location>
        <begin position="275"/>
        <end position="279"/>
    </location>
</feature>
<feature type="active site" description="Proton acceptor" evidence="1">
    <location>
        <position position="96"/>
    </location>
</feature>
<feature type="active site" description="Nucleophile" evidence="1">
    <location>
        <position position="270"/>
    </location>
</feature>
<feature type="binding site" evidence="1">
    <location>
        <begin position="96"/>
        <end position="100"/>
    </location>
    <ligand>
        <name>substrate</name>
    </ligand>
</feature>
<feature type="binding site" evidence="1">
    <location>
        <position position="150"/>
    </location>
    <ligand>
        <name>substrate</name>
    </ligand>
</feature>
<feature type="binding site" evidence="1">
    <location>
        <position position="193"/>
    </location>
    <ligand>
        <name>substrate</name>
    </ligand>
</feature>
<feature type="binding site" evidence="1">
    <location>
        <position position="220"/>
    </location>
    <ligand>
        <name>substrate</name>
    </ligand>
</feature>
<feature type="binding site" evidence="1">
    <location>
        <position position="308"/>
    </location>
    <ligand>
        <name>Zn(2+)</name>
        <dbReference type="ChEBI" id="CHEBI:29105"/>
    </ligand>
</feature>
<feature type="binding site" evidence="1">
    <location>
        <position position="310"/>
    </location>
    <ligand>
        <name>Zn(2+)</name>
        <dbReference type="ChEBI" id="CHEBI:29105"/>
    </ligand>
</feature>
<feature type="binding site" evidence="1">
    <location>
        <position position="313"/>
    </location>
    <ligand>
        <name>Zn(2+)</name>
        <dbReference type="ChEBI" id="CHEBI:29105"/>
    </ligand>
</feature>
<feature type="binding site" evidence="1">
    <location>
        <position position="339"/>
    </location>
    <ligand>
        <name>Zn(2+)</name>
        <dbReference type="ChEBI" id="CHEBI:29105"/>
    </ligand>
</feature>
<accession>C0MEV8</accession>
<reference key="1">
    <citation type="journal article" date="2009" name="PLoS Pathog.">
        <title>Genomic evidence for the evolution of Streptococcus equi: host restriction, increased virulence, and genetic exchange with human pathogens.</title>
        <authorList>
            <person name="Holden M.T.G."/>
            <person name="Heather Z."/>
            <person name="Paillot R."/>
            <person name="Steward K.F."/>
            <person name="Webb K."/>
            <person name="Ainslie F."/>
            <person name="Jourdan T."/>
            <person name="Bason N.C."/>
            <person name="Holroyd N.E."/>
            <person name="Mungall K."/>
            <person name="Quail M.A."/>
            <person name="Sanders M."/>
            <person name="Simmonds M."/>
            <person name="Willey D."/>
            <person name="Brooks K."/>
            <person name="Aanensen D.M."/>
            <person name="Spratt B.G."/>
            <person name="Jolley K.A."/>
            <person name="Maiden M.C.J."/>
            <person name="Kehoe M."/>
            <person name="Chanter N."/>
            <person name="Bentley S.D."/>
            <person name="Robinson C."/>
            <person name="Maskell D.J."/>
            <person name="Parkhill J."/>
            <person name="Waller A.S."/>
        </authorList>
    </citation>
    <scope>NUCLEOTIDE SEQUENCE [LARGE SCALE GENOMIC DNA]</scope>
    <source>
        <strain>H70</strain>
    </source>
</reference>
<name>TGT_STRS7</name>
<keyword id="KW-0328">Glycosyltransferase</keyword>
<keyword id="KW-0479">Metal-binding</keyword>
<keyword id="KW-0671">Queuosine biosynthesis</keyword>
<keyword id="KW-0808">Transferase</keyword>
<keyword id="KW-0819">tRNA processing</keyword>
<keyword id="KW-0862">Zinc</keyword>